<accession>Q7XTQ5</accession>
<proteinExistence type="evidence at transcript level"/>
<reference key="1">
    <citation type="journal article" date="2002" name="Nature">
        <title>Sequence and analysis of rice chromosome 4.</title>
        <authorList>
            <person name="Feng Q."/>
            <person name="Zhang Y."/>
            <person name="Hao P."/>
            <person name="Wang S."/>
            <person name="Fu G."/>
            <person name="Huang Y."/>
            <person name="Li Y."/>
            <person name="Zhu J."/>
            <person name="Liu Y."/>
            <person name="Hu X."/>
            <person name="Jia P."/>
            <person name="Zhang Y."/>
            <person name="Zhao Q."/>
            <person name="Ying K."/>
            <person name="Yu S."/>
            <person name="Tang Y."/>
            <person name="Weng Q."/>
            <person name="Zhang L."/>
            <person name="Lu Y."/>
            <person name="Mu J."/>
            <person name="Lu Y."/>
            <person name="Zhang L.S."/>
            <person name="Yu Z."/>
            <person name="Fan D."/>
            <person name="Liu X."/>
            <person name="Lu T."/>
            <person name="Li C."/>
            <person name="Wu Y."/>
            <person name="Sun T."/>
            <person name="Lei H."/>
            <person name="Li T."/>
            <person name="Hu H."/>
            <person name="Guan J."/>
            <person name="Wu M."/>
            <person name="Zhang R."/>
            <person name="Zhou B."/>
            <person name="Chen Z."/>
            <person name="Chen L."/>
            <person name="Jin Z."/>
            <person name="Wang R."/>
            <person name="Yin H."/>
            <person name="Cai Z."/>
            <person name="Ren S."/>
            <person name="Lv G."/>
            <person name="Gu W."/>
            <person name="Zhu G."/>
            <person name="Tu Y."/>
            <person name="Jia J."/>
            <person name="Zhang Y."/>
            <person name="Chen J."/>
            <person name="Kang H."/>
            <person name="Chen X."/>
            <person name="Shao C."/>
            <person name="Sun Y."/>
            <person name="Hu Q."/>
            <person name="Zhang X."/>
            <person name="Zhang W."/>
            <person name="Wang L."/>
            <person name="Ding C."/>
            <person name="Sheng H."/>
            <person name="Gu J."/>
            <person name="Chen S."/>
            <person name="Ni L."/>
            <person name="Zhu F."/>
            <person name="Chen W."/>
            <person name="Lan L."/>
            <person name="Lai Y."/>
            <person name="Cheng Z."/>
            <person name="Gu M."/>
            <person name="Jiang J."/>
            <person name="Li J."/>
            <person name="Hong G."/>
            <person name="Xue Y."/>
            <person name="Han B."/>
        </authorList>
    </citation>
    <scope>NUCLEOTIDE SEQUENCE [LARGE SCALE GENOMIC DNA]</scope>
    <source>
        <strain>cv. Nipponbare</strain>
    </source>
</reference>
<reference key="2">
    <citation type="journal article" date="2005" name="Nature">
        <title>The map-based sequence of the rice genome.</title>
        <authorList>
            <consortium name="International rice genome sequencing project (IRGSP)"/>
        </authorList>
    </citation>
    <scope>NUCLEOTIDE SEQUENCE [LARGE SCALE GENOMIC DNA]</scope>
    <source>
        <strain>cv. Nipponbare</strain>
    </source>
</reference>
<reference key="3">
    <citation type="journal article" date="2013" name="Rice">
        <title>Improvement of the Oryza sativa Nipponbare reference genome using next generation sequence and optical map data.</title>
        <authorList>
            <person name="Kawahara Y."/>
            <person name="de la Bastide M."/>
            <person name="Hamilton J.P."/>
            <person name="Kanamori H."/>
            <person name="McCombie W.R."/>
            <person name="Ouyang S."/>
            <person name="Schwartz D.C."/>
            <person name="Tanaka T."/>
            <person name="Wu J."/>
            <person name="Zhou S."/>
            <person name="Childs K.L."/>
            <person name="Davidson R.M."/>
            <person name="Lin H."/>
            <person name="Quesada-Ocampo L."/>
            <person name="Vaillancourt B."/>
            <person name="Sakai H."/>
            <person name="Lee S.S."/>
            <person name="Kim J."/>
            <person name="Numa H."/>
            <person name="Itoh T."/>
            <person name="Buell C.R."/>
            <person name="Matsumoto T."/>
        </authorList>
    </citation>
    <scope>GENOME REANNOTATION</scope>
    <source>
        <strain>cv. Nipponbare</strain>
    </source>
</reference>
<reference key="4">
    <citation type="journal article" date="2003" name="Science">
        <title>Collection, mapping, and annotation of over 28,000 cDNA clones from japonica rice.</title>
        <authorList>
            <consortium name="The rice full-length cDNA consortium"/>
        </authorList>
    </citation>
    <scope>NUCLEOTIDE SEQUENCE [LARGE SCALE MRNA]</scope>
    <source>
        <strain>cv. Nipponbare</strain>
    </source>
</reference>
<organism>
    <name type="scientific">Oryza sativa subsp. japonica</name>
    <name type="common">Rice</name>
    <dbReference type="NCBI Taxonomy" id="39947"/>
    <lineage>
        <taxon>Eukaryota</taxon>
        <taxon>Viridiplantae</taxon>
        <taxon>Streptophyta</taxon>
        <taxon>Embryophyta</taxon>
        <taxon>Tracheophyta</taxon>
        <taxon>Spermatophyta</taxon>
        <taxon>Magnoliopsida</taxon>
        <taxon>Liliopsida</taxon>
        <taxon>Poales</taxon>
        <taxon>Poaceae</taxon>
        <taxon>BOP clade</taxon>
        <taxon>Oryzoideae</taxon>
        <taxon>Oryzeae</taxon>
        <taxon>Oryzinae</taxon>
        <taxon>Oryza</taxon>
        <taxon>Oryza sativa</taxon>
    </lineage>
</organism>
<keyword id="KW-0150">Chloroplast</keyword>
<keyword id="KW-0462">Maltose metabolism</keyword>
<keyword id="KW-0472">Membrane</keyword>
<keyword id="KW-0934">Plastid</keyword>
<keyword id="KW-1001">Plastid inner membrane</keyword>
<keyword id="KW-1185">Reference proteome</keyword>
<keyword id="KW-0809">Transit peptide</keyword>
<keyword id="KW-0812">Transmembrane</keyword>
<keyword id="KW-1133">Transmembrane helix</keyword>
<keyword id="KW-0813">Transport</keyword>
<evidence type="ECO:0000250" key="1"/>
<evidence type="ECO:0000255" key="2"/>
<evidence type="ECO:0000305" key="3"/>
<dbReference type="EMBL" id="AL606638">
    <property type="protein sequence ID" value="CAD41866.2"/>
    <property type="molecule type" value="Genomic_DNA"/>
</dbReference>
<dbReference type="EMBL" id="AP014960">
    <property type="protein sequence ID" value="BAS90852.1"/>
    <property type="molecule type" value="Genomic_DNA"/>
</dbReference>
<dbReference type="EMBL" id="AK071005">
    <property type="status" value="NOT_ANNOTATED_CDS"/>
    <property type="molecule type" value="mRNA"/>
</dbReference>
<dbReference type="RefSeq" id="XP_015636055.1">
    <property type="nucleotide sequence ID" value="XM_015780569.1"/>
</dbReference>
<dbReference type="FunCoup" id="Q7XTQ5">
    <property type="interactions" value="1353"/>
</dbReference>
<dbReference type="STRING" id="39947.Q7XTQ5"/>
<dbReference type="PaxDb" id="39947-Q7XTQ5"/>
<dbReference type="EnsemblPlants" id="Os04t0602400-01">
    <property type="protein sequence ID" value="Os04t0602400-01"/>
    <property type="gene ID" value="Os04g0602400"/>
</dbReference>
<dbReference type="Gramene" id="Os04t0602400-01">
    <property type="protein sequence ID" value="Os04t0602400-01"/>
    <property type="gene ID" value="Os04g0602400"/>
</dbReference>
<dbReference type="eggNOG" id="ENOG502QTKC">
    <property type="taxonomic scope" value="Eukaryota"/>
</dbReference>
<dbReference type="HOGENOM" id="CLU_049521_0_0_1"/>
<dbReference type="InParanoid" id="Q7XTQ5"/>
<dbReference type="OMA" id="YQEWDSV"/>
<dbReference type="OrthoDB" id="8048523at2759"/>
<dbReference type="Proteomes" id="UP000000763">
    <property type="component" value="Chromosome 4"/>
</dbReference>
<dbReference type="Proteomes" id="UP000059680">
    <property type="component" value="Chromosome 4"/>
</dbReference>
<dbReference type="ExpressionAtlas" id="Q7XTQ5">
    <property type="expression patterns" value="baseline and differential"/>
</dbReference>
<dbReference type="GO" id="GO:0009941">
    <property type="term" value="C:chloroplast envelope"/>
    <property type="evidence" value="ECO:0000318"/>
    <property type="project" value="GO_Central"/>
</dbReference>
<dbReference type="GO" id="GO:0009706">
    <property type="term" value="C:chloroplast inner membrane"/>
    <property type="evidence" value="ECO:0007669"/>
    <property type="project" value="UniProtKB-SubCell"/>
</dbReference>
<dbReference type="GO" id="GO:0005363">
    <property type="term" value="F:maltose transmembrane transporter activity"/>
    <property type="evidence" value="ECO:0000318"/>
    <property type="project" value="GO_Central"/>
</dbReference>
<dbReference type="GO" id="GO:0000023">
    <property type="term" value="P:maltose metabolic process"/>
    <property type="evidence" value="ECO:0007669"/>
    <property type="project" value="UniProtKB-KW"/>
</dbReference>
<dbReference type="InterPro" id="IPR034628">
    <property type="entry name" value="MEX1/MEX1-like"/>
</dbReference>
<dbReference type="PANTHER" id="PTHR34809">
    <property type="entry name" value="MALTOSE EXCESS PROTEIN 1, CHLOROPLASTIC-RELATED"/>
    <property type="match status" value="1"/>
</dbReference>
<dbReference type="PANTHER" id="PTHR34809:SF1">
    <property type="entry name" value="MALTOSE EXCESS PROTEIN 1, CHLOROPLASTIC-RELATED"/>
    <property type="match status" value="1"/>
</dbReference>
<feature type="transit peptide" description="Chloroplast" evidence="2">
    <location>
        <begin position="1"/>
        <end position="67"/>
    </location>
</feature>
<feature type="chain" id="PRO_0000021685" description="Maltose excess protein 1-like, chloroplastic">
    <location>
        <begin position="68"/>
        <end position="399"/>
    </location>
</feature>
<feature type="transmembrane region" description="Helical" evidence="2">
    <location>
        <begin position="93"/>
        <end position="113"/>
    </location>
</feature>
<feature type="transmembrane region" description="Helical" evidence="2">
    <location>
        <begin position="123"/>
        <end position="143"/>
    </location>
</feature>
<feature type="transmembrane region" description="Helical" evidence="2">
    <location>
        <begin position="154"/>
        <end position="174"/>
    </location>
</feature>
<feature type="transmembrane region" description="Helical" evidence="2">
    <location>
        <begin position="180"/>
        <end position="202"/>
    </location>
</feature>
<feature type="transmembrane region" description="Helical" evidence="2">
    <location>
        <begin position="217"/>
        <end position="237"/>
    </location>
</feature>
<feature type="transmembrane region" description="Helical" evidence="2">
    <location>
        <begin position="238"/>
        <end position="258"/>
    </location>
</feature>
<feature type="transmembrane region" description="Helical" evidence="2">
    <location>
        <begin position="268"/>
        <end position="288"/>
    </location>
</feature>
<feature type="transmembrane region" description="Helical" evidence="2">
    <location>
        <begin position="306"/>
        <end position="326"/>
    </location>
</feature>
<feature type="transmembrane region" description="Helical" evidence="2">
    <location>
        <begin position="361"/>
        <end position="381"/>
    </location>
</feature>
<feature type="sequence conflict" description="In Ref. 4; AK071005." evidence="3" ref="4">
    <original>Q</original>
    <variation>R</variation>
    <location>
        <position position="158"/>
    </location>
</feature>
<feature type="sequence conflict" description="In Ref. 4; AK071005." evidence="3" ref="4">
    <original>E</original>
    <variation>G</variation>
    <location>
        <position position="176"/>
    </location>
</feature>
<protein>
    <recommendedName>
        <fullName>Maltose excess protein 1-like, chloroplastic</fullName>
    </recommendedName>
</protein>
<gene>
    <name type="ordered locus">Os04g0602400</name>
    <name type="ordered locus">LOC_Os04g51330</name>
    <name type="ORF">OSJNBa0041A02.13</name>
</gene>
<comment type="function">
    <text evidence="1">Probable maltose transporter. Essential for the conversion of starch to sucrose in leaves at night, probably via the export of maltose from the chloroplast (By similarity).</text>
</comment>
<comment type="subcellular location">
    <subcellularLocation>
        <location evidence="1">Plastid</location>
        <location evidence="1">Chloroplast inner membrane</location>
        <topology evidence="1">Multi-pass membrane protein</topology>
    </subcellularLocation>
</comment>
<name>MEX1_ORYSJ</name>
<sequence>MSSSVSSVRLPLRAAPPLYGRREWRADGARAPSPALVAVKPLSCRAPASYRSALLLHRRRRYALPPVAATATSKPVLKDPKKYQEWDSLTAKFAGAANVPFLLLQLPQIILNARNLLAGNKTALFAVPWLGMLTGLLGNLSLLSYFAKKKETGAVIVQTLGVISTYVVIAQLAMAESMPLPQFVATSAVVAAGLLLNFLNYFGWLPGTLWLLWEDFITIGGLAVLPQVMWSTFVPFIPNSLLPGIISGSLAATAVVMARMGKLSKGGINFVGSLSGWTATLLFMWMPVAQMWTNYLNPSNIKGLSAFTMLLAMIGNGLMIPRAVFIRDLMWFTGSAWASFLQGWGNLACMYCFDSISRESFLATTFGLLLWLGFTLWRDTIAHGNSSPVTSLKELLFGK</sequence>